<protein>
    <recommendedName>
        <fullName evidence="1">Triosephosphate isomerase</fullName>
        <shortName evidence="1">TIM</shortName>
        <shortName evidence="1">TPI</shortName>
        <ecNumber evidence="1">5.3.1.1</ecNumber>
    </recommendedName>
    <alternativeName>
        <fullName evidence="1">Triose-phosphate isomerase</fullName>
    </alternativeName>
</protein>
<accession>Q0KCT2</accession>
<proteinExistence type="inferred from homology"/>
<feature type="chain" id="PRO_0000307542" description="Triosephosphate isomerase">
    <location>
        <begin position="1"/>
        <end position="245"/>
    </location>
</feature>
<feature type="active site" description="Electrophile" evidence="1">
    <location>
        <position position="92"/>
    </location>
</feature>
<feature type="active site" description="Proton acceptor" evidence="1">
    <location>
        <position position="164"/>
    </location>
</feature>
<feature type="binding site" evidence="1">
    <location>
        <begin position="9"/>
        <end position="11"/>
    </location>
    <ligand>
        <name>substrate</name>
    </ligand>
</feature>
<feature type="binding site" evidence="1">
    <location>
        <position position="170"/>
    </location>
    <ligand>
        <name>substrate</name>
    </ligand>
</feature>
<feature type="binding site" evidence="1">
    <location>
        <position position="209"/>
    </location>
    <ligand>
        <name>substrate</name>
    </ligand>
</feature>
<feature type="binding site" evidence="1">
    <location>
        <begin position="230"/>
        <end position="231"/>
    </location>
    <ligand>
        <name>substrate</name>
    </ligand>
</feature>
<organism>
    <name type="scientific">Cupriavidus necator (strain ATCC 17699 / DSM 428 / KCTC 22496 / NCIMB 10442 / H16 / Stanier 337)</name>
    <name type="common">Ralstonia eutropha</name>
    <dbReference type="NCBI Taxonomy" id="381666"/>
    <lineage>
        <taxon>Bacteria</taxon>
        <taxon>Pseudomonadati</taxon>
        <taxon>Pseudomonadota</taxon>
        <taxon>Betaproteobacteria</taxon>
        <taxon>Burkholderiales</taxon>
        <taxon>Burkholderiaceae</taxon>
        <taxon>Cupriavidus</taxon>
    </lineage>
</organism>
<name>TPIS_CUPNH</name>
<reference key="1">
    <citation type="journal article" date="2006" name="Nat. Biotechnol.">
        <title>Genome sequence of the bioplastic-producing 'Knallgas' bacterium Ralstonia eutropha H16.</title>
        <authorList>
            <person name="Pohlmann A."/>
            <person name="Fricke W.F."/>
            <person name="Reinecke F."/>
            <person name="Kusian B."/>
            <person name="Liesegang H."/>
            <person name="Cramm R."/>
            <person name="Eitinger T."/>
            <person name="Ewering C."/>
            <person name="Poetter M."/>
            <person name="Schwartz E."/>
            <person name="Strittmatter A."/>
            <person name="Voss I."/>
            <person name="Gottschalk G."/>
            <person name="Steinbuechel A."/>
            <person name="Friedrich B."/>
            <person name="Bowien B."/>
        </authorList>
    </citation>
    <scope>NUCLEOTIDE SEQUENCE [LARGE SCALE GENOMIC DNA]</scope>
    <source>
        <strain>ATCC 17699 / DSM 428 / KCTC 22496 / NCIMB 10442 / H16 / Stanier 337</strain>
    </source>
</reference>
<dbReference type="EC" id="5.3.1.1" evidence="1"/>
<dbReference type="EMBL" id="AM260479">
    <property type="protein sequence ID" value="CAJ92189.1"/>
    <property type="molecule type" value="Genomic_DNA"/>
</dbReference>
<dbReference type="RefSeq" id="WP_011614855.1">
    <property type="nucleotide sequence ID" value="NC_008313.1"/>
</dbReference>
<dbReference type="SMR" id="Q0KCT2"/>
<dbReference type="STRING" id="381666.H16_A1047"/>
<dbReference type="KEGG" id="reh:H16_A1047"/>
<dbReference type="eggNOG" id="COG0149">
    <property type="taxonomic scope" value="Bacteria"/>
</dbReference>
<dbReference type="HOGENOM" id="CLU_024251_2_3_4"/>
<dbReference type="OrthoDB" id="9809429at2"/>
<dbReference type="UniPathway" id="UPA00109">
    <property type="reaction ID" value="UER00189"/>
</dbReference>
<dbReference type="UniPathway" id="UPA00138"/>
<dbReference type="Proteomes" id="UP000008210">
    <property type="component" value="Chromosome 1"/>
</dbReference>
<dbReference type="GO" id="GO:0005829">
    <property type="term" value="C:cytosol"/>
    <property type="evidence" value="ECO:0007669"/>
    <property type="project" value="TreeGrafter"/>
</dbReference>
<dbReference type="GO" id="GO:0004807">
    <property type="term" value="F:triose-phosphate isomerase activity"/>
    <property type="evidence" value="ECO:0007669"/>
    <property type="project" value="UniProtKB-UniRule"/>
</dbReference>
<dbReference type="GO" id="GO:0006094">
    <property type="term" value="P:gluconeogenesis"/>
    <property type="evidence" value="ECO:0007669"/>
    <property type="project" value="UniProtKB-UniRule"/>
</dbReference>
<dbReference type="GO" id="GO:0046166">
    <property type="term" value="P:glyceraldehyde-3-phosphate biosynthetic process"/>
    <property type="evidence" value="ECO:0007669"/>
    <property type="project" value="TreeGrafter"/>
</dbReference>
<dbReference type="GO" id="GO:0019563">
    <property type="term" value="P:glycerol catabolic process"/>
    <property type="evidence" value="ECO:0007669"/>
    <property type="project" value="TreeGrafter"/>
</dbReference>
<dbReference type="GO" id="GO:0006096">
    <property type="term" value="P:glycolytic process"/>
    <property type="evidence" value="ECO:0007669"/>
    <property type="project" value="UniProtKB-UniRule"/>
</dbReference>
<dbReference type="CDD" id="cd00311">
    <property type="entry name" value="TIM"/>
    <property type="match status" value="1"/>
</dbReference>
<dbReference type="FunFam" id="3.20.20.70:FF:000016">
    <property type="entry name" value="Triosephosphate isomerase"/>
    <property type="match status" value="1"/>
</dbReference>
<dbReference type="Gene3D" id="3.20.20.70">
    <property type="entry name" value="Aldolase class I"/>
    <property type="match status" value="1"/>
</dbReference>
<dbReference type="HAMAP" id="MF_00147_B">
    <property type="entry name" value="TIM_B"/>
    <property type="match status" value="1"/>
</dbReference>
<dbReference type="InterPro" id="IPR013785">
    <property type="entry name" value="Aldolase_TIM"/>
</dbReference>
<dbReference type="InterPro" id="IPR035990">
    <property type="entry name" value="TIM_sf"/>
</dbReference>
<dbReference type="InterPro" id="IPR022896">
    <property type="entry name" value="TrioseP_Isoase_bac/euk"/>
</dbReference>
<dbReference type="InterPro" id="IPR000652">
    <property type="entry name" value="Triosephosphate_isomerase"/>
</dbReference>
<dbReference type="InterPro" id="IPR020861">
    <property type="entry name" value="Triosephosphate_isomerase_AS"/>
</dbReference>
<dbReference type="NCBIfam" id="TIGR00419">
    <property type="entry name" value="tim"/>
    <property type="match status" value="1"/>
</dbReference>
<dbReference type="PANTHER" id="PTHR21139">
    <property type="entry name" value="TRIOSEPHOSPHATE ISOMERASE"/>
    <property type="match status" value="1"/>
</dbReference>
<dbReference type="PANTHER" id="PTHR21139:SF42">
    <property type="entry name" value="TRIOSEPHOSPHATE ISOMERASE"/>
    <property type="match status" value="1"/>
</dbReference>
<dbReference type="Pfam" id="PF00121">
    <property type="entry name" value="TIM"/>
    <property type="match status" value="1"/>
</dbReference>
<dbReference type="SUPFAM" id="SSF51351">
    <property type="entry name" value="Triosephosphate isomerase (TIM)"/>
    <property type="match status" value="1"/>
</dbReference>
<dbReference type="PROSITE" id="PS00171">
    <property type="entry name" value="TIM_1"/>
    <property type="match status" value="1"/>
</dbReference>
<dbReference type="PROSITE" id="PS51440">
    <property type="entry name" value="TIM_2"/>
    <property type="match status" value="1"/>
</dbReference>
<evidence type="ECO:0000255" key="1">
    <source>
        <dbReference type="HAMAP-Rule" id="MF_00147"/>
    </source>
</evidence>
<gene>
    <name evidence="1" type="primary">tpiA</name>
    <name type="ordered locus">H16_A1047</name>
</gene>
<comment type="function">
    <text evidence="1">Involved in the gluconeogenesis. Catalyzes stereospecifically the conversion of dihydroxyacetone phosphate (DHAP) to D-glyceraldehyde-3-phosphate (G3P).</text>
</comment>
<comment type="catalytic activity">
    <reaction evidence="1">
        <text>D-glyceraldehyde 3-phosphate = dihydroxyacetone phosphate</text>
        <dbReference type="Rhea" id="RHEA:18585"/>
        <dbReference type="ChEBI" id="CHEBI:57642"/>
        <dbReference type="ChEBI" id="CHEBI:59776"/>
        <dbReference type="EC" id="5.3.1.1"/>
    </reaction>
</comment>
<comment type="pathway">
    <text evidence="1">Carbohydrate biosynthesis; gluconeogenesis.</text>
</comment>
<comment type="pathway">
    <text evidence="1">Carbohydrate degradation; glycolysis; D-glyceraldehyde 3-phosphate from glycerone phosphate: step 1/1.</text>
</comment>
<comment type="subunit">
    <text evidence="1">Homodimer.</text>
</comment>
<comment type="subcellular location">
    <subcellularLocation>
        <location evidence="1">Cytoplasm</location>
    </subcellularLocation>
</comment>
<comment type="similarity">
    <text evidence="1">Belongs to the triosephosphate isomerase family.</text>
</comment>
<sequence length="245" mass="25406">MRQKLVIGNWKMHGSLAANAALLEGIKAGAAKATLAVCAPFPYLAQCQALLNGSQVAWGAQDVSAEARGAFTGEVSASMVGEFGCTYVLVGHSERRTYHGETDQTVAAKALRALEFGIVPVVCVGETLAQREAGETEAVVGRQLQAVLDALTVEQLSRVVLAYEPVWAIGTGKTATSEQAQAVHAFLRGQVAARDAGVAERMAILYGGSVKPDNAAELFSMTDIDGGLIGGASLKSADFLAIGNA</sequence>
<keyword id="KW-0963">Cytoplasm</keyword>
<keyword id="KW-0312">Gluconeogenesis</keyword>
<keyword id="KW-0324">Glycolysis</keyword>
<keyword id="KW-0413">Isomerase</keyword>
<keyword id="KW-1185">Reference proteome</keyword>